<proteinExistence type="inferred from homology"/>
<comment type="function">
    <text evidence="1">One of the primary rRNA binding proteins, it binds directly to 16S rRNA where it nucleates assembly of the head domain of the 30S subunit. Is located at the subunit interface close to the decoding center.</text>
</comment>
<comment type="subunit">
    <text evidence="1">Part of the 30S ribosomal subunit.</text>
</comment>
<comment type="similarity">
    <text evidence="1">Belongs to the universal ribosomal protein uS7 family.</text>
</comment>
<protein>
    <recommendedName>
        <fullName evidence="1">Small ribosomal subunit protein uS7</fullName>
    </recommendedName>
    <alternativeName>
        <fullName evidence="2">30S ribosomal protein S7</fullName>
    </alternativeName>
</protein>
<dbReference type="EMBL" id="AE017261">
    <property type="protein sequence ID" value="AAT43439.1"/>
    <property type="molecule type" value="Genomic_DNA"/>
</dbReference>
<dbReference type="RefSeq" id="WP_011177655.1">
    <property type="nucleotide sequence ID" value="NC_005877.1"/>
</dbReference>
<dbReference type="SMR" id="Q6L0R3"/>
<dbReference type="FunCoup" id="Q6L0R3">
    <property type="interactions" value="197"/>
</dbReference>
<dbReference type="STRING" id="263820.PTO0854"/>
<dbReference type="PaxDb" id="263820-PTO0854"/>
<dbReference type="GeneID" id="2845376"/>
<dbReference type="KEGG" id="pto:PTO0854"/>
<dbReference type="PATRIC" id="fig|263820.9.peg.892"/>
<dbReference type="eggNOG" id="arCOG04254">
    <property type="taxonomic scope" value="Archaea"/>
</dbReference>
<dbReference type="HOGENOM" id="CLU_063975_0_0_2"/>
<dbReference type="InParanoid" id="Q6L0R3"/>
<dbReference type="OrthoDB" id="45346at2157"/>
<dbReference type="Proteomes" id="UP000000438">
    <property type="component" value="Chromosome"/>
</dbReference>
<dbReference type="GO" id="GO:0015935">
    <property type="term" value="C:small ribosomal subunit"/>
    <property type="evidence" value="ECO:0007669"/>
    <property type="project" value="InterPro"/>
</dbReference>
<dbReference type="GO" id="GO:0019843">
    <property type="term" value="F:rRNA binding"/>
    <property type="evidence" value="ECO:0007669"/>
    <property type="project" value="UniProtKB-UniRule"/>
</dbReference>
<dbReference type="GO" id="GO:0003735">
    <property type="term" value="F:structural constituent of ribosome"/>
    <property type="evidence" value="ECO:0007669"/>
    <property type="project" value="InterPro"/>
</dbReference>
<dbReference type="GO" id="GO:0006412">
    <property type="term" value="P:translation"/>
    <property type="evidence" value="ECO:0007669"/>
    <property type="project" value="UniProtKB-UniRule"/>
</dbReference>
<dbReference type="CDD" id="cd14867">
    <property type="entry name" value="uS7_Eukaryote"/>
    <property type="match status" value="1"/>
</dbReference>
<dbReference type="Gene3D" id="1.10.455.10">
    <property type="entry name" value="Ribosomal protein S7 domain"/>
    <property type="match status" value="1"/>
</dbReference>
<dbReference type="HAMAP" id="MF_00480_A">
    <property type="entry name" value="Ribosomal_uS7_A"/>
    <property type="match status" value="1"/>
</dbReference>
<dbReference type="InterPro" id="IPR000235">
    <property type="entry name" value="Ribosomal_uS7"/>
</dbReference>
<dbReference type="InterPro" id="IPR026018">
    <property type="entry name" value="Ribosomal_uS7_arc"/>
</dbReference>
<dbReference type="InterPro" id="IPR020606">
    <property type="entry name" value="Ribosomal_uS7_CS"/>
</dbReference>
<dbReference type="InterPro" id="IPR023798">
    <property type="entry name" value="Ribosomal_uS7_dom"/>
</dbReference>
<dbReference type="InterPro" id="IPR036823">
    <property type="entry name" value="Ribosomal_uS7_dom_sf"/>
</dbReference>
<dbReference type="InterPro" id="IPR005716">
    <property type="entry name" value="Ribosomal_uS7_euk/arc"/>
</dbReference>
<dbReference type="NCBIfam" id="NF003106">
    <property type="entry name" value="PRK04027.1"/>
    <property type="match status" value="1"/>
</dbReference>
<dbReference type="NCBIfam" id="TIGR01028">
    <property type="entry name" value="uS7_euk_arch"/>
    <property type="match status" value="1"/>
</dbReference>
<dbReference type="PANTHER" id="PTHR11205">
    <property type="entry name" value="RIBOSOMAL PROTEIN S7"/>
    <property type="match status" value="1"/>
</dbReference>
<dbReference type="Pfam" id="PF00177">
    <property type="entry name" value="Ribosomal_S7"/>
    <property type="match status" value="1"/>
</dbReference>
<dbReference type="PIRSF" id="PIRSF002122">
    <property type="entry name" value="RPS7p_RPS7a_RPS5e_RPS7o"/>
    <property type="match status" value="1"/>
</dbReference>
<dbReference type="SUPFAM" id="SSF47973">
    <property type="entry name" value="Ribosomal protein S7"/>
    <property type="match status" value="1"/>
</dbReference>
<dbReference type="PROSITE" id="PS00052">
    <property type="entry name" value="RIBOSOMAL_S7"/>
    <property type="match status" value="1"/>
</dbReference>
<reference key="1">
    <citation type="journal article" date="2004" name="Proc. Natl. Acad. Sci. U.S.A.">
        <title>Genome sequence of Picrophilus torridus and its implications for life around pH 0.</title>
        <authorList>
            <person name="Fuetterer O."/>
            <person name="Angelov A."/>
            <person name="Liesegang H."/>
            <person name="Gottschalk G."/>
            <person name="Schleper C."/>
            <person name="Schepers B."/>
            <person name="Dock C."/>
            <person name="Antranikian G."/>
            <person name="Liebl W."/>
        </authorList>
    </citation>
    <scope>NUCLEOTIDE SEQUENCE [LARGE SCALE GENOMIC DNA]</scope>
    <source>
        <strain>ATCC 700027 / DSM 9790 / JCM 10055 / NBRC 100828 / KAW 2/3</strain>
    </source>
</reference>
<organism>
    <name type="scientific">Picrophilus torridus (strain ATCC 700027 / DSM 9790 / JCM 10055 / NBRC 100828 / KAW 2/3)</name>
    <dbReference type="NCBI Taxonomy" id="1122961"/>
    <lineage>
        <taxon>Archaea</taxon>
        <taxon>Methanobacteriati</taxon>
        <taxon>Thermoplasmatota</taxon>
        <taxon>Thermoplasmata</taxon>
        <taxon>Thermoplasmatales</taxon>
        <taxon>Picrophilaceae</taxon>
        <taxon>Picrophilus</taxon>
    </lineage>
</organism>
<name>RS7_PICTO</name>
<accession>Q6L0R3</accession>
<gene>
    <name evidence="1" type="primary">rps7</name>
    <name type="ordered locus">PTO0854</name>
</gene>
<feature type="chain" id="PRO_0000344317" description="Small ribosomal subunit protein uS7">
    <location>
        <begin position="1"/>
        <end position="187"/>
    </location>
</feature>
<keyword id="KW-0687">Ribonucleoprotein</keyword>
<keyword id="KW-0689">Ribosomal protein</keyword>
<keyword id="KW-0694">RNA-binding</keyword>
<keyword id="KW-0699">rRNA-binding</keyword>
<evidence type="ECO:0000255" key="1">
    <source>
        <dbReference type="HAMAP-Rule" id="MF_00480"/>
    </source>
</evidence>
<evidence type="ECO:0000305" key="2"/>
<sequence>MDRLIMGKYDVSGIQIHDMGLAKYINLNSYFNLHTGGRYSNYSAGKRNVNTIERLLNKLMRTEKWTGKKYSAYRVLKEAFEIVEQKTKQNPVQVLINAIENSAPREEVTRLKYGGIAVPKSVDVSPSRRLDEALRNICIGATSKSFKSKVPIEECLANEIILASRNDGNSYAVSKKEEIERVAASAR</sequence>